<sequence>MKKIVVIPGDGIGKEVMEAAMLILEKLDLPFEYSYYDAGDEALEKYGKALPDETLEACRKSDAVLFGAAGETAADVIVRLRRELGTFANVRPAKAIEGIECLYPGLDIVVVRENTECLYMGFEFGFGDVTEAIRVITREASERIARYAFELAKREGRKKVTALHKANVMKKTCGLFRDVCREVAKDYPEIQYNDYYIDAACMYLVMDPFRFDVIVTTNMFGDIVSDLAAGLVGGLGLAPSANVGERTAIFEPVHGAAFDIAGKGIANPTAMILTACMMLRHFGYVEEAKKVEEAVEKTIKEGKKTPDLGGNLKTMEFANEVASLLD</sequence>
<dbReference type="EC" id="1.1.1.85"/>
<dbReference type="EMBL" id="AE000782">
    <property type="protein sequence ID" value="AAB90611.1"/>
    <property type="molecule type" value="Genomic_DNA"/>
</dbReference>
<dbReference type="PIR" id="D69328">
    <property type="entry name" value="D69328"/>
</dbReference>
<dbReference type="RefSeq" id="WP_010878132.1">
    <property type="nucleotide sequence ID" value="NC_000917.1"/>
</dbReference>
<dbReference type="SMR" id="O29627"/>
<dbReference type="STRING" id="224325.AF_0628"/>
<dbReference type="PaxDb" id="224325-AF_0628"/>
<dbReference type="EnsemblBacteria" id="AAB90611">
    <property type="protein sequence ID" value="AAB90611"/>
    <property type="gene ID" value="AF_0628"/>
</dbReference>
<dbReference type="KEGG" id="afu:AF_0628"/>
<dbReference type="eggNOG" id="arCOG01163">
    <property type="taxonomic scope" value="Archaea"/>
</dbReference>
<dbReference type="HOGENOM" id="CLU_031953_0_1_2"/>
<dbReference type="OrthoDB" id="6813at2157"/>
<dbReference type="PhylomeDB" id="O29627"/>
<dbReference type="UniPathway" id="UPA00048">
    <property type="reaction ID" value="UER00072"/>
</dbReference>
<dbReference type="Proteomes" id="UP000002199">
    <property type="component" value="Chromosome"/>
</dbReference>
<dbReference type="GO" id="GO:0005737">
    <property type="term" value="C:cytoplasm"/>
    <property type="evidence" value="ECO:0007669"/>
    <property type="project" value="UniProtKB-SubCell"/>
</dbReference>
<dbReference type="GO" id="GO:0003862">
    <property type="term" value="F:3-isopropylmalate dehydrogenase activity"/>
    <property type="evidence" value="ECO:0007669"/>
    <property type="project" value="UniProtKB-EC"/>
</dbReference>
<dbReference type="GO" id="GO:0004449">
    <property type="term" value="F:isocitrate dehydrogenase (NAD+) activity"/>
    <property type="evidence" value="ECO:0007669"/>
    <property type="project" value="TreeGrafter"/>
</dbReference>
<dbReference type="GO" id="GO:0000287">
    <property type="term" value="F:magnesium ion binding"/>
    <property type="evidence" value="ECO:0007669"/>
    <property type="project" value="InterPro"/>
</dbReference>
<dbReference type="GO" id="GO:0051287">
    <property type="term" value="F:NAD binding"/>
    <property type="evidence" value="ECO:0007669"/>
    <property type="project" value="InterPro"/>
</dbReference>
<dbReference type="GO" id="GO:0006102">
    <property type="term" value="P:isocitrate metabolic process"/>
    <property type="evidence" value="ECO:0007669"/>
    <property type="project" value="TreeGrafter"/>
</dbReference>
<dbReference type="GO" id="GO:0009098">
    <property type="term" value="P:L-leucine biosynthetic process"/>
    <property type="evidence" value="ECO:0007669"/>
    <property type="project" value="UniProtKB-UniPathway"/>
</dbReference>
<dbReference type="GO" id="GO:0006099">
    <property type="term" value="P:tricarboxylic acid cycle"/>
    <property type="evidence" value="ECO:0007669"/>
    <property type="project" value="TreeGrafter"/>
</dbReference>
<dbReference type="FunFam" id="3.40.718.10:FF:000019">
    <property type="entry name" value="Homoisocitrate dehydrogenase"/>
    <property type="match status" value="1"/>
</dbReference>
<dbReference type="Gene3D" id="3.40.718.10">
    <property type="entry name" value="Isopropylmalate Dehydrogenase"/>
    <property type="match status" value="1"/>
</dbReference>
<dbReference type="InterPro" id="IPR019818">
    <property type="entry name" value="IsoCit/isopropylmalate_DH_CS"/>
</dbReference>
<dbReference type="InterPro" id="IPR024084">
    <property type="entry name" value="IsoPropMal-DH-like_dom"/>
</dbReference>
<dbReference type="InterPro" id="IPR011828">
    <property type="entry name" value="LEU3_arc"/>
</dbReference>
<dbReference type="NCBIfam" id="TIGR02088">
    <property type="entry name" value="LEU3_arch"/>
    <property type="match status" value="1"/>
</dbReference>
<dbReference type="PANTHER" id="PTHR11835">
    <property type="entry name" value="DECARBOXYLATING DEHYDROGENASES-ISOCITRATE, ISOPROPYLMALATE, TARTRATE"/>
    <property type="match status" value="1"/>
</dbReference>
<dbReference type="PANTHER" id="PTHR11835:SF34">
    <property type="entry name" value="ISOCITRATE DEHYDROGENASE [NAD] SUBUNIT ALPHA, MITOCHONDRIAL"/>
    <property type="match status" value="1"/>
</dbReference>
<dbReference type="Pfam" id="PF00180">
    <property type="entry name" value="Iso_dh"/>
    <property type="match status" value="1"/>
</dbReference>
<dbReference type="SMART" id="SM01329">
    <property type="entry name" value="Iso_dh"/>
    <property type="match status" value="1"/>
</dbReference>
<dbReference type="SUPFAM" id="SSF53659">
    <property type="entry name" value="Isocitrate/Isopropylmalate dehydrogenase-like"/>
    <property type="match status" value="1"/>
</dbReference>
<dbReference type="PROSITE" id="PS00470">
    <property type="entry name" value="IDH_IMDH"/>
    <property type="match status" value="1"/>
</dbReference>
<organism>
    <name type="scientific">Archaeoglobus fulgidus (strain ATCC 49558 / DSM 4304 / JCM 9628 / NBRC 100126 / VC-16)</name>
    <dbReference type="NCBI Taxonomy" id="224325"/>
    <lineage>
        <taxon>Archaea</taxon>
        <taxon>Methanobacteriati</taxon>
        <taxon>Methanobacteriota</taxon>
        <taxon>Archaeoglobi</taxon>
        <taxon>Archaeoglobales</taxon>
        <taxon>Archaeoglobaceae</taxon>
        <taxon>Archaeoglobus</taxon>
    </lineage>
</organism>
<proteinExistence type="inferred from homology"/>
<gene>
    <name type="primary">leuB</name>
    <name type="ordered locus">AF_0628</name>
</gene>
<evidence type="ECO:0000250" key="1"/>
<evidence type="ECO:0000305" key="2"/>
<protein>
    <recommendedName>
        <fullName>3-isopropylmalate dehydrogenase</fullName>
        <shortName>3-IPM-DH</shortName>
        <shortName>IMDH</shortName>
        <ecNumber>1.1.1.85</ecNumber>
    </recommendedName>
    <alternativeName>
        <fullName>Beta-IPM dehydrogenase</fullName>
    </alternativeName>
</protein>
<reference key="1">
    <citation type="journal article" date="1997" name="Nature">
        <title>The complete genome sequence of the hyperthermophilic, sulphate-reducing archaeon Archaeoglobus fulgidus.</title>
        <authorList>
            <person name="Klenk H.-P."/>
            <person name="Clayton R.A."/>
            <person name="Tomb J.-F."/>
            <person name="White O."/>
            <person name="Nelson K.E."/>
            <person name="Ketchum K.A."/>
            <person name="Dodson R.J."/>
            <person name="Gwinn M.L."/>
            <person name="Hickey E.K."/>
            <person name="Peterson J.D."/>
            <person name="Richardson D.L."/>
            <person name="Kerlavage A.R."/>
            <person name="Graham D.E."/>
            <person name="Kyrpides N.C."/>
            <person name="Fleischmann R.D."/>
            <person name="Quackenbush J."/>
            <person name="Lee N.H."/>
            <person name="Sutton G.G."/>
            <person name="Gill S.R."/>
            <person name="Kirkness E.F."/>
            <person name="Dougherty B.A."/>
            <person name="McKenney K."/>
            <person name="Adams M.D."/>
            <person name="Loftus B.J."/>
            <person name="Peterson S.N."/>
            <person name="Reich C.I."/>
            <person name="McNeil L.K."/>
            <person name="Badger J.H."/>
            <person name="Glodek A."/>
            <person name="Zhou L."/>
            <person name="Overbeek R."/>
            <person name="Gocayne J.D."/>
            <person name="Weidman J.F."/>
            <person name="McDonald L.A."/>
            <person name="Utterback T.R."/>
            <person name="Cotton M.D."/>
            <person name="Spriggs T."/>
            <person name="Artiach P."/>
            <person name="Kaine B.P."/>
            <person name="Sykes S.M."/>
            <person name="Sadow P.W."/>
            <person name="D'Andrea K.P."/>
            <person name="Bowman C."/>
            <person name="Fujii C."/>
            <person name="Garland S.A."/>
            <person name="Mason T.M."/>
            <person name="Olsen G.J."/>
            <person name="Fraser C.M."/>
            <person name="Smith H.O."/>
            <person name="Woese C.R."/>
            <person name="Venter J.C."/>
        </authorList>
    </citation>
    <scope>NUCLEOTIDE SEQUENCE [LARGE SCALE GENOMIC DNA]</scope>
    <source>
        <strain>ATCC 49558 / DSM 4304 / JCM 9628 / NBRC 100126 / VC-16</strain>
    </source>
</reference>
<accession>O29627</accession>
<keyword id="KW-0028">Amino-acid biosynthesis</keyword>
<keyword id="KW-0100">Branched-chain amino acid biosynthesis</keyword>
<keyword id="KW-0963">Cytoplasm</keyword>
<keyword id="KW-0432">Leucine biosynthesis</keyword>
<keyword id="KW-0460">Magnesium</keyword>
<keyword id="KW-0464">Manganese</keyword>
<keyword id="KW-0479">Metal-binding</keyword>
<keyword id="KW-0520">NAD</keyword>
<keyword id="KW-0560">Oxidoreductase</keyword>
<keyword id="KW-1185">Reference proteome</keyword>
<feature type="chain" id="PRO_0000083808" description="3-isopropylmalate dehydrogenase">
    <location>
        <begin position="1"/>
        <end position="326"/>
    </location>
</feature>
<feature type="binding site" evidence="1">
    <location>
        <position position="81"/>
    </location>
    <ligand>
        <name>substrate</name>
    </ligand>
</feature>
<feature type="binding site" evidence="1">
    <location>
        <position position="91"/>
    </location>
    <ligand>
        <name>substrate</name>
    </ligand>
</feature>
<feature type="binding site" evidence="1">
    <location>
        <position position="112"/>
    </location>
    <ligand>
        <name>substrate</name>
    </ligand>
</feature>
<feature type="binding site" evidence="1">
    <location>
        <position position="198"/>
    </location>
    <ligand>
        <name>Mg(2+)</name>
        <dbReference type="ChEBI" id="CHEBI:18420"/>
    </ligand>
</feature>
<feature type="binding site" evidence="1">
    <location>
        <position position="198"/>
    </location>
    <ligand>
        <name>substrate</name>
    </ligand>
</feature>
<feature type="binding site" evidence="1">
    <location>
        <position position="222"/>
    </location>
    <ligand>
        <name>Mg(2+)</name>
        <dbReference type="ChEBI" id="CHEBI:18420"/>
    </ligand>
</feature>
<feature type="binding site" evidence="1">
    <location>
        <position position="226"/>
    </location>
    <ligand>
        <name>Mg(2+)</name>
        <dbReference type="ChEBI" id="CHEBI:18420"/>
    </ligand>
</feature>
<feature type="binding site" evidence="1">
    <location>
        <begin position="255"/>
        <end position="267"/>
    </location>
    <ligand>
        <name>NAD(+)</name>
        <dbReference type="ChEBI" id="CHEBI:57540"/>
    </ligand>
</feature>
<feature type="site" description="Important for catalysis" evidence="1">
    <location>
        <position position="119"/>
    </location>
</feature>
<feature type="site" description="Important for catalysis" evidence="1">
    <location>
        <position position="165"/>
    </location>
</feature>
<name>LEU3_ARCFU</name>
<comment type="function">
    <text evidence="1">Catalyzes the oxidation of 3-carboxy-2-hydroxy-4-methylpentanoate (3-isopropylmalate) to 3-carboxy-4-methyl-2-oxopentanoate. The product decarboxylates to 4-methyl-2 oxopentanoate (By similarity).</text>
</comment>
<comment type="catalytic activity">
    <reaction>
        <text>(2R,3S)-3-isopropylmalate + NAD(+) = 4-methyl-2-oxopentanoate + CO2 + NADH</text>
        <dbReference type="Rhea" id="RHEA:32271"/>
        <dbReference type="ChEBI" id="CHEBI:16526"/>
        <dbReference type="ChEBI" id="CHEBI:17865"/>
        <dbReference type="ChEBI" id="CHEBI:35121"/>
        <dbReference type="ChEBI" id="CHEBI:57540"/>
        <dbReference type="ChEBI" id="CHEBI:57945"/>
        <dbReference type="EC" id="1.1.1.85"/>
    </reaction>
</comment>
<comment type="cofactor">
    <cofactor evidence="1">
        <name>Mg(2+)</name>
        <dbReference type="ChEBI" id="CHEBI:18420"/>
    </cofactor>
    <cofactor evidence="1">
        <name>Mn(2+)</name>
        <dbReference type="ChEBI" id="CHEBI:29035"/>
    </cofactor>
    <text evidence="1">Binds 1 Mg(2+) or Mn(2+) ion per subunit.</text>
</comment>
<comment type="pathway">
    <text>Amino-acid biosynthesis; L-leucine biosynthesis; L-leucine from 3-methyl-2-oxobutanoate: step 3/4.</text>
</comment>
<comment type="subunit">
    <text evidence="1">Homotetramer.</text>
</comment>
<comment type="subcellular location">
    <subcellularLocation>
        <location evidence="1">Cytoplasm</location>
    </subcellularLocation>
</comment>
<comment type="similarity">
    <text evidence="2">Belongs to the isocitrate and isopropylmalate dehydrogenases family.</text>
</comment>